<keyword id="KW-0963">Cytoplasm</keyword>
<keyword id="KW-0342">GTP-binding</keyword>
<keyword id="KW-0396">Initiation factor</keyword>
<keyword id="KW-0547">Nucleotide-binding</keyword>
<keyword id="KW-0648">Protein biosynthesis</keyword>
<gene>
    <name evidence="2" type="primary">infB</name>
    <name type="ordered locus">SAV1269</name>
</gene>
<protein>
    <recommendedName>
        <fullName evidence="2">Translation initiation factor IF-2</fullName>
    </recommendedName>
</protein>
<feature type="chain" id="PRO_0000137249" description="Translation initiation factor IF-2">
    <location>
        <begin position="1"/>
        <end position="705"/>
    </location>
</feature>
<feature type="domain" description="tr-type G">
    <location>
        <begin position="207"/>
        <end position="376"/>
    </location>
</feature>
<feature type="region of interest" description="Disordered" evidence="3">
    <location>
        <begin position="40"/>
        <end position="124"/>
    </location>
</feature>
<feature type="region of interest" description="G1" evidence="1">
    <location>
        <begin position="216"/>
        <end position="223"/>
    </location>
</feature>
<feature type="region of interest" description="G2" evidence="1">
    <location>
        <begin position="241"/>
        <end position="245"/>
    </location>
</feature>
<feature type="region of interest" description="G3" evidence="1">
    <location>
        <begin position="262"/>
        <end position="265"/>
    </location>
</feature>
<feature type="region of interest" description="G4" evidence="1">
    <location>
        <begin position="316"/>
        <end position="319"/>
    </location>
</feature>
<feature type="region of interest" description="G5" evidence="1">
    <location>
        <begin position="352"/>
        <end position="354"/>
    </location>
</feature>
<feature type="compositionally biased region" description="Basic and acidic residues" evidence="3">
    <location>
        <begin position="41"/>
        <end position="58"/>
    </location>
</feature>
<feature type="compositionally biased region" description="Low complexity" evidence="3">
    <location>
        <begin position="59"/>
        <end position="77"/>
    </location>
</feature>
<feature type="compositionally biased region" description="Basic residues" evidence="3">
    <location>
        <begin position="94"/>
        <end position="108"/>
    </location>
</feature>
<feature type="binding site" evidence="2">
    <location>
        <begin position="216"/>
        <end position="223"/>
    </location>
    <ligand>
        <name>GTP</name>
        <dbReference type="ChEBI" id="CHEBI:37565"/>
    </ligand>
</feature>
<feature type="binding site" evidence="2">
    <location>
        <begin position="262"/>
        <end position="266"/>
    </location>
    <ligand>
        <name>GTP</name>
        <dbReference type="ChEBI" id="CHEBI:37565"/>
    </ligand>
</feature>
<feature type="binding site" evidence="2">
    <location>
        <begin position="316"/>
        <end position="319"/>
    </location>
    <ligand>
        <name>GTP</name>
        <dbReference type="ChEBI" id="CHEBI:37565"/>
    </ligand>
</feature>
<proteinExistence type="inferred from homology"/>
<accession>P65133</accession>
<accession>Q99UK3</accession>
<sequence length="705" mass="77857">MSKQRIYEYAKELNLKSKEIIDELKSMNIEVSNHMQALEDDQIKALDKKFKKEQKNDNKQSTQNNHQKSNNQNQNKGQQKDNKKNQQQNNKGNKGNKKNNRNNKKNNKNNKPQNQPAAPKEIPSKVTYQEGITVGEFADKLNVESSEIIKKLFLLGIVANINQSLNQETIELIADDYGVEVEEEVVINEEDLSIYFEDEKDDPEAIERPAVVTIMGHVDHGKTTLLDSIRHTKVTAGEAGGITQHIGAYQIENDGKKITFLDTPGHAAFTTMRARGAQVTDITILVVAADDGVMPQTIEAINHAKEAEVPIIVAVNKIDKPTSNPDRVMQELTEYGLIPEDWGGETIFVPLSALSGDGIDDLLEMIGLVAEVQELKANPKNRAVGTVIEAELDKSRGPSASLLVQNGTLNVGDAIVVGNTYGRIRAMVNDLGQRIKTAGPSTPVEITGINDVPQAGDRFVVFSDEKQARRIGESRHEASIVQQRQESKNVSLDNLFEQMKQGEMKDLNVIIKGDVQGSVEALAASLMKIDVEGVNVRIIHTAVGAINESDVTLANASNGIIIGFNVRPDSGAKRAAEAENVDMRLHRVIYNVIEEIESAMKGLLDPEFEEQVIGQAEVRQTFKVSKVGTIAGCYVTEGKITRNAGVRIIRDGIVQYEGELDTLKRFKDDAKEVAKGYECGITIENYNDLKEGDVIEAFEMVEIKR</sequence>
<dbReference type="EMBL" id="BA000017">
    <property type="protein sequence ID" value="BAB57431.1"/>
    <property type="molecule type" value="Genomic_DNA"/>
</dbReference>
<dbReference type="RefSeq" id="WP_000043635.1">
    <property type="nucleotide sequence ID" value="NC_002758.2"/>
</dbReference>
<dbReference type="SMR" id="P65133"/>
<dbReference type="KEGG" id="sav:SAV1269"/>
<dbReference type="HOGENOM" id="CLU_006301_5_1_9"/>
<dbReference type="PhylomeDB" id="P65133"/>
<dbReference type="Proteomes" id="UP000002481">
    <property type="component" value="Chromosome"/>
</dbReference>
<dbReference type="GO" id="GO:0005829">
    <property type="term" value="C:cytosol"/>
    <property type="evidence" value="ECO:0007669"/>
    <property type="project" value="TreeGrafter"/>
</dbReference>
<dbReference type="GO" id="GO:0005525">
    <property type="term" value="F:GTP binding"/>
    <property type="evidence" value="ECO:0007669"/>
    <property type="project" value="UniProtKB-KW"/>
</dbReference>
<dbReference type="GO" id="GO:0003924">
    <property type="term" value="F:GTPase activity"/>
    <property type="evidence" value="ECO:0007669"/>
    <property type="project" value="UniProtKB-UniRule"/>
</dbReference>
<dbReference type="GO" id="GO:0003743">
    <property type="term" value="F:translation initiation factor activity"/>
    <property type="evidence" value="ECO:0007669"/>
    <property type="project" value="UniProtKB-UniRule"/>
</dbReference>
<dbReference type="CDD" id="cd01887">
    <property type="entry name" value="IF2_eIF5B"/>
    <property type="match status" value="1"/>
</dbReference>
<dbReference type="CDD" id="cd03702">
    <property type="entry name" value="IF2_mtIF2_II"/>
    <property type="match status" value="1"/>
</dbReference>
<dbReference type="CDD" id="cd03692">
    <property type="entry name" value="mtIF2_IVc"/>
    <property type="match status" value="1"/>
</dbReference>
<dbReference type="FunFam" id="1.10.10.2480:FF:000002">
    <property type="entry name" value="Translation initiation factor IF-2"/>
    <property type="match status" value="1"/>
</dbReference>
<dbReference type="FunFam" id="2.40.30.10:FF:000007">
    <property type="entry name" value="Translation initiation factor IF-2"/>
    <property type="match status" value="1"/>
</dbReference>
<dbReference type="FunFam" id="2.40.30.10:FF:000008">
    <property type="entry name" value="Translation initiation factor IF-2"/>
    <property type="match status" value="1"/>
</dbReference>
<dbReference type="FunFam" id="3.40.50.10050:FF:000001">
    <property type="entry name" value="Translation initiation factor IF-2"/>
    <property type="match status" value="1"/>
</dbReference>
<dbReference type="FunFam" id="3.40.50.300:FF:000019">
    <property type="entry name" value="Translation initiation factor IF-2"/>
    <property type="match status" value="1"/>
</dbReference>
<dbReference type="Gene3D" id="1.10.10.2480">
    <property type="match status" value="1"/>
</dbReference>
<dbReference type="Gene3D" id="3.40.50.300">
    <property type="entry name" value="P-loop containing nucleotide triphosphate hydrolases"/>
    <property type="match status" value="1"/>
</dbReference>
<dbReference type="Gene3D" id="2.40.30.10">
    <property type="entry name" value="Translation factors"/>
    <property type="match status" value="2"/>
</dbReference>
<dbReference type="Gene3D" id="3.40.50.10050">
    <property type="entry name" value="Translation initiation factor IF- 2, domain 3"/>
    <property type="match status" value="1"/>
</dbReference>
<dbReference type="HAMAP" id="MF_00100_B">
    <property type="entry name" value="IF_2_B"/>
    <property type="match status" value="1"/>
</dbReference>
<dbReference type="InterPro" id="IPR053905">
    <property type="entry name" value="EF-G-like_DII"/>
</dbReference>
<dbReference type="InterPro" id="IPR044145">
    <property type="entry name" value="IF2_II"/>
</dbReference>
<dbReference type="InterPro" id="IPR006847">
    <property type="entry name" value="IF2_N"/>
</dbReference>
<dbReference type="InterPro" id="IPR027417">
    <property type="entry name" value="P-loop_NTPase"/>
</dbReference>
<dbReference type="InterPro" id="IPR005225">
    <property type="entry name" value="Small_GTP-bd"/>
</dbReference>
<dbReference type="InterPro" id="IPR000795">
    <property type="entry name" value="T_Tr_GTP-bd_dom"/>
</dbReference>
<dbReference type="InterPro" id="IPR000178">
    <property type="entry name" value="TF_IF2_bacterial-like"/>
</dbReference>
<dbReference type="InterPro" id="IPR015760">
    <property type="entry name" value="TIF_IF2"/>
</dbReference>
<dbReference type="InterPro" id="IPR023115">
    <property type="entry name" value="TIF_IF2_dom3"/>
</dbReference>
<dbReference type="InterPro" id="IPR036925">
    <property type="entry name" value="TIF_IF2_dom3_sf"/>
</dbReference>
<dbReference type="InterPro" id="IPR009000">
    <property type="entry name" value="Transl_B-barrel_sf"/>
</dbReference>
<dbReference type="NCBIfam" id="TIGR00487">
    <property type="entry name" value="IF-2"/>
    <property type="match status" value="1"/>
</dbReference>
<dbReference type="NCBIfam" id="TIGR00231">
    <property type="entry name" value="small_GTP"/>
    <property type="match status" value="1"/>
</dbReference>
<dbReference type="PANTHER" id="PTHR43381:SF5">
    <property type="entry name" value="TR-TYPE G DOMAIN-CONTAINING PROTEIN"/>
    <property type="match status" value="1"/>
</dbReference>
<dbReference type="PANTHER" id="PTHR43381">
    <property type="entry name" value="TRANSLATION INITIATION FACTOR IF-2-RELATED"/>
    <property type="match status" value="1"/>
</dbReference>
<dbReference type="Pfam" id="PF22042">
    <property type="entry name" value="EF-G_D2"/>
    <property type="match status" value="1"/>
</dbReference>
<dbReference type="Pfam" id="PF00009">
    <property type="entry name" value="GTP_EFTU"/>
    <property type="match status" value="1"/>
</dbReference>
<dbReference type="Pfam" id="PF11987">
    <property type="entry name" value="IF-2"/>
    <property type="match status" value="1"/>
</dbReference>
<dbReference type="Pfam" id="PF04760">
    <property type="entry name" value="IF2_N"/>
    <property type="match status" value="2"/>
</dbReference>
<dbReference type="SUPFAM" id="SSF52156">
    <property type="entry name" value="Initiation factor IF2/eIF5b, domain 3"/>
    <property type="match status" value="1"/>
</dbReference>
<dbReference type="SUPFAM" id="SSF52540">
    <property type="entry name" value="P-loop containing nucleoside triphosphate hydrolases"/>
    <property type="match status" value="1"/>
</dbReference>
<dbReference type="SUPFAM" id="SSF50447">
    <property type="entry name" value="Translation proteins"/>
    <property type="match status" value="2"/>
</dbReference>
<dbReference type="PROSITE" id="PS51722">
    <property type="entry name" value="G_TR_2"/>
    <property type="match status" value="1"/>
</dbReference>
<dbReference type="PROSITE" id="PS01176">
    <property type="entry name" value="IF2"/>
    <property type="match status" value="1"/>
</dbReference>
<evidence type="ECO:0000250" key="1"/>
<evidence type="ECO:0000255" key="2">
    <source>
        <dbReference type="HAMAP-Rule" id="MF_00100"/>
    </source>
</evidence>
<evidence type="ECO:0000256" key="3">
    <source>
        <dbReference type="SAM" id="MobiDB-lite"/>
    </source>
</evidence>
<organism>
    <name type="scientific">Staphylococcus aureus (strain Mu50 / ATCC 700699)</name>
    <dbReference type="NCBI Taxonomy" id="158878"/>
    <lineage>
        <taxon>Bacteria</taxon>
        <taxon>Bacillati</taxon>
        <taxon>Bacillota</taxon>
        <taxon>Bacilli</taxon>
        <taxon>Bacillales</taxon>
        <taxon>Staphylococcaceae</taxon>
        <taxon>Staphylococcus</taxon>
    </lineage>
</organism>
<comment type="function">
    <text evidence="2">One of the essential components for the initiation of protein synthesis. Protects formylmethionyl-tRNA from spontaneous hydrolysis and promotes its binding to the 30S ribosomal subunits. Also involved in the hydrolysis of GTP during the formation of the 70S ribosomal complex.</text>
</comment>
<comment type="subcellular location">
    <subcellularLocation>
        <location evidence="2">Cytoplasm</location>
    </subcellularLocation>
</comment>
<comment type="similarity">
    <text evidence="2">Belongs to the TRAFAC class translation factor GTPase superfamily. Classic translation factor GTPase family. IF-2 subfamily.</text>
</comment>
<reference key="1">
    <citation type="journal article" date="2001" name="Lancet">
        <title>Whole genome sequencing of meticillin-resistant Staphylococcus aureus.</title>
        <authorList>
            <person name="Kuroda M."/>
            <person name="Ohta T."/>
            <person name="Uchiyama I."/>
            <person name="Baba T."/>
            <person name="Yuzawa H."/>
            <person name="Kobayashi I."/>
            <person name="Cui L."/>
            <person name="Oguchi A."/>
            <person name="Aoki K."/>
            <person name="Nagai Y."/>
            <person name="Lian J.-Q."/>
            <person name="Ito T."/>
            <person name="Kanamori M."/>
            <person name="Matsumaru H."/>
            <person name="Maruyama A."/>
            <person name="Murakami H."/>
            <person name="Hosoyama A."/>
            <person name="Mizutani-Ui Y."/>
            <person name="Takahashi N.K."/>
            <person name="Sawano T."/>
            <person name="Inoue R."/>
            <person name="Kaito C."/>
            <person name="Sekimizu K."/>
            <person name="Hirakawa H."/>
            <person name="Kuhara S."/>
            <person name="Goto S."/>
            <person name="Yabuzaki J."/>
            <person name="Kanehisa M."/>
            <person name="Yamashita A."/>
            <person name="Oshima K."/>
            <person name="Furuya K."/>
            <person name="Yoshino C."/>
            <person name="Shiba T."/>
            <person name="Hattori M."/>
            <person name="Ogasawara N."/>
            <person name="Hayashi H."/>
            <person name="Hiramatsu K."/>
        </authorList>
    </citation>
    <scope>NUCLEOTIDE SEQUENCE [LARGE SCALE GENOMIC DNA]</scope>
    <source>
        <strain>Mu50 / ATCC 700699</strain>
    </source>
</reference>
<name>IF2_STAAM</name>